<accession>P0AD34</accession>
<accession>P76504</accession>
<accession>P77331</accession>
<dbReference type="EMBL" id="AE014075">
    <property type="protein sequence ID" value="AAN81338.1"/>
    <property type="status" value="ALT_INIT"/>
    <property type="molecule type" value="Genomic_DNA"/>
</dbReference>
<dbReference type="RefSeq" id="WP_001296261.1">
    <property type="nucleotide sequence ID" value="NZ_CP051263.1"/>
</dbReference>
<dbReference type="SMR" id="P0AD34"/>
<dbReference type="STRING" id="199310.c2888"/>
<dbReference type="DNASU" id="1038456"/>
<dbReference type="KEGG" id="ecc:c2888"/>
<dbReference type="eggNOG" id="COG3691">
    <property type="taxonomic scope" value="Bacteria"/>
</dbReference>
<dbReference type="HOGENOM" id="CLU_162758_0_0_6"/>
<dbReference type="Proteomes" id="UP000001410">
    <property type="component" value="Chromosome"/>
</dbReference>
<dbReference type="GO" id="GO:0005829">
    <property type="term" value="C:cytosol"/>
    <property type="evidence" value="ECO:0007669"/>
    <property type="project" value="TreeGrafter"/>
</dbReference>
<dbReference type="FunFam" id="3.30.70.860:FF:000002">
    <property type="entry name" value="DUF406 family protein"/>
    <property type="match status" value="1"/>
</dbReference>
<dbReference type="Gene3D" id="3.30.70.860">
    <property type="match status" value="1"/>
</dbReference>
<dbReference type="InterPro" id="IPR005272">
    <property type="entry name" value="DUF406"/>
</dbReference>
<dbReference type="InterPro" id="IPR035571">
    <property type="entry name" value="UPF0234-like_C"/>
</dbReference>
<dbReference type="NCBIfam" id="TIGR00743">
    <property type="entry name" value="DUF406 family protein"/>
    <property type="match status" value="1"/>
</dbReference>
<dbReference type="PANTHER" id="PTHR38769">
    <property type="entry name" value="UPF0381 PROTEIN YFCZ-RELATED"/>
    <property type="match status" value="1"/>
</dbReference>
<dbReference type="PANTHER" id="PTHR38769:SF1">
    <property type="entry name" value="UPF0381 PROTEIN YFCZ-RELATED"/>
    <property type="match status" value="1"/>
</dbReference>
<dbReference type="Pfam" id="PF04175">
    <property type="entry name" value="DUF406"/>
    <property type="match status" value="1"/>
</dbReference>
<organism>
    <name type="scientific">Escherichia coli O6:H1 (strain CFT073 / ATCC 700928 / UPEC)</name>
    <dbReference type="NCBI Taxonomy" id="199310"/>
    <lineage>
        <taxon>Bacteria</taxon>
        <taxon>Pseudomonadati</taxon>
        <taxon>Pseudomonadota</taxon>
        <taxon>Gammaproteobacteria</taxon>
        <taxon>Enterobacterales</taxon>
        <taxon>Enterobacteriaceae</taxon>
        <taxon>Escherichia</taxon>
    </lineage>
</organism>
<reference key="1">
    <citation type="journal article" date="2002" name="Proc. Natl. Acad. Sci. U.S.A.">
        <title>Extensive mosaic structure revealed by the complete genome sequence of uropathogenic Escherichia coli.</title>
        <authorList>
            <person name="Welch R.A."/>
            <person name="Burland V."/>
            <person name="Plunkett G. III"/>
            <person name="Redford P."/>
            <person name="Roesch P."/>
            <person name="Rasko D."/>
            <person name="Buckles E.L."/>
            <person name="Liou S.-R."/>
            <person name="Boutin A."/>
            <person name="Hackett J."/>
            <person name="Stroud D."/>
            <person name="Mayhew G.F."/>
            <person name="Rose D.J."/>
            <person name="Zhou S."/>
            <person name="Schwartz D.C."/>
            <person name="Perna N.T."/>
            <person name="Mobley H.L.T."/>
            <person name="Donnenberg M.S."/>
            <person name="Blattner F.R."/>
        </authorList>
    </citation>
    <scope>NUCLEOTIDE SEQUENCE [LARGE SCALE GENOMIC DNA]</scope>
    <source>
        <strain>CFT073 / ATCC 700928 / UPEC</strain>
    </source>
</reference>
<proteinExistence type="inferred from homology"/>
<keyword id="KW-1185">Reference proteome</keyword>
<sequence length="94" mass="10318">MSKCSADETPVCCCMDVGTIMDNSDCTASYSRVFANRAEAEQTLAALTEKARSVESEPCKITPTFTEESDGVRLDIDFTFACEAEMLIFQLGLR</sequence>
<feature type="chain" id="PRO_0000169199" description="UPF0381 protein YfcZ">
    <location>
        <begin position="1"/>
        <end position="94"/>
    </location>
</feature>
<evidence type="ECO:0000305" key="1"/>
<comment type="similarity">
    <text evidence="1">Belongs to the UPF0381 family.</text>
</comment>
<comment type="sequence caution" evidence="1">
    <conflict type="erroneous initiation">
        <sequence resource="EMBL-CDS" id="AAN81338"/>
    </conflict>
</comment>
<gene>
    <name type="primary">yfcZ</name>
    <name type="ordered locus">c2888</name>
</gene>
<protein>
    <recommendedName>
        <fullName>UPF0381 protein YfcZ</fullName>
    </recommendedName>
</protein>
<name>YFCZ_ECOL6</name>